<gene>
    <name evidence="1" type="primary">rsmC</name>
    <name type="ordered locus">UTI89_C5079</name>
</gene>
<proteinExistence type="inferred from homology"/>
<reference key="1">
    <citation type="journal article" date="2006" name="Proc. Natl. Acad. Sci. U.S.A.">
        <title>Identification of genes subject to positive selection in uropathogenic strains of Escherichia coli: a comparative genomics approach.</title>
        <authorList>
            <person name="Chen S.L."/>
            <person name="Hung C.-S."/>
            <person name="Xu J."/>
            <person name="Reigstad C.S."/>
            <person name="Magrini V."/>
            <person name="Sabo A."/>
            <person name="Blasiar D."/>
            <person name="Bieri T."/>
            <person name="Meyer R.R."/>
            <person name="Ozersky P."/>
            <person name="Armstrong J.R."/>
            <person name="Fulton R.S."/>
            <person name="Latreille J.P."/>
            <person name="Spieth J."/>
            <person name="Hooton T.M."/>
            <person name="Mardis E.R."/>
            <person name="Hultgren S.J."/>
            <person name="Gordon J.I."/>
        </authorList>
    </citation>
    <scope>NUCLEOTIDE SEQUENCE [LARGE SCALE GENOMIC DNA]</scope>
    <source>
        <strain>UTI89 / UPEC</strain>
    </source>
</reference>
<protein>
    <recommendedName>
        <fullName evidence="1">Ribosomal RNA small subunit methyltransferase C</fullName>
        <ecNumber evidence="1">2.1.1.172</ecNumber>
    </recommendedName>
    <alternativeName>
        <fullName evidence="1">16S rRNA m2G1207 methyltransferase</fullName>
    </alternativeName>
    <alternativeName>
        <fullName evidence="1">rRNA (guanine-N(2)-)-methyltransferase RsmC</fullName>
    </alternativeName>
</protein>
<comment type="function">
    <text evidence="1">Specifically methylates the guanine in position 1207 of 16S rRNA in the 30S particle.</text>
</comment>
<comment type="catalytic activity">
    <reaction evidence="1">
        <text>guanosine(1207) in 16S rRNA + S-adenosyl-L-methionine = N(2)-methylguanosine(1207) in 16S rRNA + S-adenosyl-L-homocysteine + H(+)</text>
        <dbReference type="Rhea" id="RHEA:42736"/>
        <dbReference type="Rhea" id="RHEA-COMP:10213"/>
        <dbReference type="Rhea" id="RHEA-COMP:10214"/>
        <dbReference type="ChEBI" id="CHEBI:15378"/>
        <dbReference type="ChEBI" id="CHEBI:57856"/>
        <dbReference type="ChEBI" id="CHEBI:59789"/>
        <dbReference type="ChEBI" id="CHEBI:74269"/>
        <dbReference type="ChEBI" id="CHEBI:74481"/>
        <dbReference type="EC" id="2.1.1.172"/>
    </reaction>
</comment>
<comment type="subunit">
    <text evidence="1">Monomer.</text>
</comment>
<comment type="subcellular location">
    <subcellularLocation>
        <location evidence="1">Cytoplasm</location>
    </subcellularLocation>
</comment>
<comment type="similarity">
    <text evidence="1">Belongs to the methyltransferase superfamily. RsmC family.</text>
</comment>
<dbReference type="EC" id="2.1.1.172" evidence="1"/>
<dbReference type="EMBL" id="CP000243">
    <property type="protein sequence ID" value="ABE10479.1"/>
    <property type="molecule type" value="Genomic_DNA"/>
</dbReference>
<dbReference type="RefSeq" id="WP_001272336.1">
    <property type="nucleotide sequence ID" value="NZ_CP064825.1"/>
</dbReference>
<dbReference type="SMR" id="Q1R2D5"/>
<dbReference type="KEGG" id="eci:UTI89_C5079"/>
<dbReference type="HOGENOM" id="CLU_049581_0_1_6"/>
<dbReference type="Proteomes" id="UP000001952">
    <property type="component" value="Chromosome"/>
</dbReference>
<dbReference type="GO" id="GO:0005737">
    <property type="term" value="C:cytoplasm"/>
    <property type="evidence" value="ECO:0007669"/>
    <property type="project" value="UniProtKB-SubCell"/>
</dbReference>
<dbReference type="GO" id="GO:0052914">
    <property type="term" value="F:16S rRNA (guanine(1207)-N(2))-methyltransferase activity"/>
    <property type="evidence" value="ECO:0007669"/>
    <property type="project" value="UniProtKB-EC"/>
</dbReference>
<dbReference type="GO" id="GO:0003676">
    <property type="term" value="F:nucleic acid binding"/>
    <property type="evidence" value="ECO:0007669"/>
    <property type="project" value="InterPro"/>
</dbReference>
<dbReference type="CDD" id="cd02440">
    <property type="entry name" value="AdoMet_MTases"/>
    <property type="match status" value="1"/>
</dbReference>
<dbReference type="FunFam" id="3.40.50.150:FF:000058">
    <property type="entry name" value="Ribosomal RNA small subunit methyltransferase C"/>
    <property type="match status" value="1"/>
</dbReference>
<dbReference type="FunFam" id="3.40.50.150:FF:000063">
    <property type="entry name" value="Ribosomal RNA small subunit methyltransferase C"/>
    <property type="match status" value="1"/>
</dbReference>
<dbReference type="Gene3D" id="3.40.50.150">
    <property type="entry name" value="Vaccinia Virus protein VP39"/>
    <property type="match status" value="2"/>
</dbReference>
<dbReference type="HAMAP" id="MF_01862">
    <property type="entry name" value="16SrRNA_methyltr_C"/>
    <property type="match status" value="1"/>
</dbReference>
<dbReference type="InterPro" id="IPR002052">
    <property type="entry name" value="DNA_methylase_N6_adenine_CS"/>
</dbReference>
<dbReference type="InterPro" id="IPR013675">
    <property type="entry name" value="Mtase_sm_N"/>
</dbReference>
<dbReference type="InterPro" id="IPR023543">
    <property type="entry name" value="rRNA_ssu_MeTfrase_C"/>
</dbReference>
<dbReference type="InterPro" id="IPR046977">
    <property type="entry name" value="RsmC/RlmG"/>
</dbReference>
<dbReference type="InterPro" id="IPR029063">
    <property type="entry name" value="SAM-dependent_MTases_sf"/>
</dbReference>
<dbReference type="InterPro" id="IPR007848">
    <property type="entry name" value="Small_mtfrase_dom"/>
</dbReference>
<dbReference type="NCBIfam" id="NF007023">
    <property type="entry name" value="PRK09489.1"/>
    <property type="match status" value="1"/>
</dbReference>
<dbReference type="PANTHER" id="PTHR47816">
    <property type="entry name" value="RIBOSOMAL RNA SMALL SUBUNIT METHYLTRANSFERASE C"/>
    <property type="match status" value="1"/>
</dbReference>
<dbReference type="PANTHER" id="PTHR47816:SF4">
    <property type="entry name" value="RIBOSOMAL RNA SMALL SUBUNIT METHYLTRANSFERASE C"/>
    <property type="match status" value="1"/>
</dbReference>
<dbReference type="Pfam" id="PF05175">
    <property type="entry name" value="MTS"/>
    <property type="match status" value="1"/>
</dbReference>
<dbReference type="Pfam" id="PF08468">
    <property type="entry name" value="MTS_N"/>
    <property type="match status" value="1"/>
</dbReference>
<dbReference type="SUPFAM" id="SSF53335">
    <property type="entry name" value="S-adenosyl-L-methionine-dependent methyltransferases"/>
    <property type="match status" value="1"/>
</dbReference>
<name>RSMC_ECOUT</name>
<organism>
    <name type="scientific">Escherichia coli (strain UTI89 / UPEC)</name>
    <dbReference type="NCBI Taxonomy" id="364106"/>
    <lineage>
        <taxon>Bacteria</taxon>
        <taxon>Pseudomonadati</taxon>
        <taxon>Pseudomonadota</taxon>
        <taxon>Gammaproteobacteria</taxon>
        <taxon>Enterobacterales</taxon>
        <taxon>Enterobacteriaceae</taxon>
        <taxon>Escherichia</taxon>
    </lineage>
</organism>
<keyword id="KW-0963">Cytoplasm</keyword>
<keyword id="KW-0489">Methyltransferase</keyword>
<keyword id="KW-0698">rRNA processing</keyword>
<keyword id="KW-0949">S-adenosyl-L-methionine</keyword>
<keyword id="KW-0808">Transferase</keyword>
<sequence>MSAFTPASEVLLRHSDDFEQSRILFAGDLQDDLPARLDTAASRAHTQQFHHWQVLSRQMGDNARFSLVATANDVADCDTLIYYWPKNKPEAQFQLMNLLSLLPVGTDIFVVGENRSGVRIAEQMLADYAPLNKVDSARRCGLYFGRLEKQPVFDANKFWGEYSVDGLTVKTLPGVFSRDGLDVGSQLLLSTLTPHTKGKVLDVGCGAGVLSVAFARHSPKIRLTLCDVSAPAVEASRATLATNGVEGEVFASNVFSEVKGRFDMIISNPPFHDGMQTSLDAAQTLIRGAVRHLNSGGELRIVANAFLPYPDVLDETFGFHEVIAQTGRFKVYRAIMTRQAKKG</sequence>
<accession>Q1R2D5</accession>
<feature type="chain" id="PRO_0000369703" description="Ribosomal RNA small subunit methyltransferase C">
    <location>
        <begin position="1"/>
        <end position="343"/>
    </location>
</feature>
<evidence type="ECO:0000255" key="1">
    <source>
        <dbReference type="HAMAP-Rule" id="MF_01862"/>
    </source>
</evidence>